<comment type="function">
    <text>Hydroxylation of nitrilotriacetate.</text>
</comment>
<comment type="catalytic activity">
    <reaction evidence="2 3">
        <text>nitrilotriacetate + FMNH2 + O2 = aminodiacetate + FMN + glyoxylate + H2O</text>
        <dbReference type="Rhea" id="RHEA:31359"/>
        <dbReference type="ChEBI" id="CHEBI:15377"/>
        <dbReference type="ChEBI" id="CHEBI:15379"/>
        <dbReference type="ChEBI" id="CHEBI:25548"/>
        <dbReference type="ChEBI" id="CHEBI:36655"/>
        <dbReference type="ChEBI" id="CHEBI:57618"/>
        <dbReference type="ChEBI" id="CHEBI:58210"/>
        <dbReference type="ChEBI" id="CHEBI:62745"/>
        <dbReference type="EC" id="1.14.14.10"/>
    </reaction>
</comment>
<comment type="biophysicochemical properties">
    <kinetics>
        <KM evidence="2">0.5 mM for nitriloacetate</KM>
        <KM evidence="2">350 uM for NADH</KM>
    </kinetics>
</comment>
<comment type="subunit">
    <text evidence="2">Heterodimer of two subunits, A and B.</text>
</comment>
<comment type="similarity">
    <text evidence="4">Belongs to the NtaA/SnaA/DszA monooxygenase family.</text>
</comment>
<protein>
    <recommendedName>
        <fullName>Nitrilotriacetate monooxygenase component A</fullName>
        <shortName>NTA monooxygenase component A</shortName>
        <shortName>NTA-MO A</shortName>
        <ecNumber>1.14.14.10</ecNumber>
    </recommendedName>
</protein>
<organism>
    <name type="scientific">Aminobacter aminovorans</name>
    <name type="common">Chelatobacter heintzii</name>
    <dbReference type="NCBI Taxonomy" id="83263"/>
    <lineage>
        <taxon>Bacteria</taxon>
        <taxon>Pseudomonadati</taxon>
        <taxon>Pseudomonadota</taxon>
        <taxon>Alphaproteobacteria</taxon>
        <taxon>Hyphomicrobiales</taxon>
        <taxon>Phyllobacteriaceae</taxon>
        <taxon>Aminobacter</taxon>
    </lineage>
</organism>
<dbReference type="EC" id="1.14.14.10"/>
<dbReference type="EMBL" id="U39411">
    <property type="protein sequence ID" value="AAB05943.1"/>
    <property type="molecule type" value="Genomic_DNA"/>
</dbReference>
<dbReference type="EMBL" id="L49438">
    <property type="protein sequence ID" value="AAB47922.1"/>
    <property type="molecule type" value="Genomic_DNA"/>
</dbReference>
<dbReference type="PIR" id="I40750">
    <property type="entry name" value="I40750"/>
</dbReference>
<dbReference type="RefSeq" id="WP_067969613.1">
    <property type="nucleotide sequence ID" value="NZ_CP015007.1"/>
</dbReference>
<dbReference type="SMR" id="P54989"/>
<dbReference type="KEGG" id="ag:AAB05943"/>
<dbReference type="OrthoDB" id="9779442at2"/>
<dbReference type="BioCyc" id="MetaCyc:MONOMER-14047"/>
<dbReference type="BRENDA" id="1.14.14.10">
    <property type="organism ID" value="5090"/>
</dbReference>
<dbReference type="SABIO-RK" id="P54989"/>
<dbReference type="GO" id="GO:0018529">
    <property type="term" value="F:nitrilotriacetate monooxygenase activity"/>
    <property type="evidence" value="ECO:0007669"/>
    <property type="project" value="UniProtKB-EC"/>
</dbReference>
<dbReference type="CDD" id="cd01095">
    <property type="entry name" value="Nitrilotriacetate_monoxgenase"/>
    <property type="match status" value="1"/>
</dbReference>
<dbReference type="Gene3D" id="3.20.20.30">
    <property type="entry name" value="Luciferase-like domain"/>
    <property type="match status" value="1"/>
</dbReference>
<dbReference type="InterPro" id="IPR051260">
    <property type="entry name" value="Diverse_substr_monoxygenases"/>
</dbReference>
<dbReference type="InterPro" id="IPR011251">
    <property type="entry name" value="Luciferase-like_dom"/>
</dbReference>
<dbReference type="InterPro" id="IPR036661">
    <property type="entry name" value="Luciferase-like_sf"/>
</dbReference>
<dbReference type="InterPro" id="IPR016215">
    <property type="entry name" value="NTA_MOA"/>
</dbReference>
<dbReference type="NCBIfam" id="TIGR03860">
    <property type="entry name" value="FMN_nitrolo"/>
    <property type="match status" value="1"/>
</dbReference>
<dbReference type="PANTHER" id="PTHR30011">
    <property type="entry name" value="ALKANESULFONATE MONOOXYGENASE-RELATED"/>
    <property type="match status" value="1"/>
</dbReference>
<dbReference type="PANTHER" id="PTHR30011:SF16">
    <property type="entry name" value="C2H2 FINGER DOMAIN TRANSCRIPTION FACTOR (EUROFUNG)-RELATED"/>
    <property type="match status" value="1"/>
</dbReference>
<dbReference type="Pfam" id="PF00296">
    <property type="entry name" value="Bac_luciferase"/>
    <property type="match status" value="1"/>
</dbReference>
<dbReference type="PIRSF" id="PIRSF000337">
    <property type="entry name" value="NTA_MOA"/>
    <property type="match status" value="1"/>
</dbReference>
<dbReference type="SUPFAM" id="SSF51679">
    <property type="entry name" value="Bacterial luciferase-like"/>
    <property type="match status" value="1"/>
</dbReference>
<name>NTAA_AMIAI</name>
<accession>P54989</accession>
<reference key="1">
    <citation type="journal article" date="1996" name="J. Bacteriol.">
        <title>Cloning and characterization of the genes encoding nitrilotriacetate monooxygenase of Chelatobacter heintzii ATCC 29600.</title>
        <authorList>
            <person name="Knobel H.R."/>
            <person name="Egli T."/>
            <person name="van der Meer J.R."/>
        </authorList>
    </citation>
    <scope>NUCLEOTIDE SEQUENCE [GENOMIC DNA]</scope>
    <scope>PROTEIN SEQUENCE OF 1-12</scope>
    <source>
        <strain>ATCC 29600 / DSM 10368 / NCIMB 13986</strain>
    </source>
</reference>
<reference key="2">
    <citation type="journal article" date="1997" name="J. Bacteriol.">
        <title>Cloning, sequencing, and analysis of a gene cluster from Chelatobacter heintzii ATCC 29600 encoding nitrilotriacetate monooxygenase and NADH:flavin mononucleotide oxidoreductase.</title>
        <authorList>
            <person name="Xu Y."/>
            <person name="Mortimer M.W."/>
            <person name="Fisher T.S."/>
            <person name="Kahn M.L."/>
            <person name="Brockman F.J."/>
            <person name="Xun L."/>
        </authorList>
    </citation>
    <scope>NUCLEOTIDE SEQUENCE [GENOMIC DNA]</scope>
    <scope>PROTEIN SEQUENCE OF 1-20</scope>
    <scope>CATALYTIC ACTIVITY</scope>
    <source>
        <strain>ATCC 29600 / DSM 10368 / NCIMB 13986</strain>
    </source>
</reference>
<reference key="3">
    <citation type="journal article" date="1992" name="J. Bacteriol.">
        <title>Purification and characterization of a two-component monooxygenase that hydroxylates nitrilotriacetate from 'Chelatobacter' strain ATCC 29600.</title>
        <authorList>
            <person name="Uetz T."/>
            <person name="Schneider R."/>
            <person name="Snozzi M."/>
            <person name="Egli T."/>
        </authorList>
    </citation>
    <scope>CATALYTIC ACTIVITY</scope>
    <scope>SUBUNIT</scope>
    <scope>SUBSTRATE SPECIFICITY</scope>
    <scope>BIOPHYSICOCHEMICAL PROPERTIES</scope>
    <source>
        <strain>ATCC 29600 / DSM 10368 / NCIMB 13986</strain>
    </source>
</reference>
<gene>
    <name type="primary">ntaA</name>
    <name type="synonym">nmoA</name>
</gene>
<feature type="chain" id="PRO_0000057969" description="Nitrilotriacetate monooxygenase component A">
    <location>
        <begin position="1"/>
        <end position="453"/>
    </location>
</feature>
<feature type="binding site" evidence="1">
    <location>
        <position position="58"/>
    </location>
    <ligand>
        <name>FMN</name>
        <dbReference type="ChEBI" id="CHEBI:58210"/>
    </ligand>
</feature>
<feature type="binding site" evidence="1">
    <location>
        <position position="107"/>
    </location>
    <ligand>
        <name>FMN</name>
        <dbReference type="ChEBI" id="CHEBI:58210"/>
    </ligand>
</feature>
<feature type="binding site" evidence="1">
    <location>
        <position position="157"/>
    </location>
    <ligand>
        <name>FMN</name>
        <dbReference type="ChEBI" id="CHEBI:58210"/>
    </ligand>
</feature>
<feature type="binding site" evidence="1">
    <location>
        <position position="161"/>
    </location>
    <ligand>
        <name>FMN</name>
        <dbReference type="ChEBI" id="CHEBI:58210"/>
    </ligand>
</feature>
<feature type="binding site" evidence="1">
    <location>
        <position position="231"/>
    </location>
    <ligand>
        <name>FMN</name>
        <dbReference type="ChEBI" id="CHEBI:58210"/>
    </ligand>
</feature>
<feature type="binding site" evidence="1">
    <location>
        <position position="232"/>
    </location>
    <ligand>
        <name>FMN</name>
        <dbReference type="ChEBI" id="CHEBI:58210"/>
    </ligand>
</feature>
<keyword id="KW-0903">Direct protein sequencing</keyword>
<keyword id="KW-0285">Flavoprotein</keyword>
<keyword id="KW-0288">FMN</keyword>
<keyword id="KW-0503">Monooxygenase</keyword>
<keyword id="KW-0560">Oxidoreductase</keyword>
<sequence length="453" mass="50529">MGANKQMNLGFLFQISGVHYGGWRYPSAQPHRATDIQYYAEIVRTAERGKLDFCFLADSIAAYEGSADQQDRSKDALMAAEPKRLLEPFTLLAALAMVTEHIGLVTTATTTYNEPYTMARLFASLDHITNGRAGWNVVTSANLAEAHNFGRDGHVEHGDRYARAEEFINVVFKLWDSIEDGAYLRDKLAGRYGLSEKIHFINHIGEHFKVRGPLNVPRPPQGHPVIVQAGSSHPGKELAARTAEVVFTAQQTLADGKAFYSDVKGRMAKYGRSSENLKVLPGVVVYVAETESEAKAKYETVSNLVPPDFGLFMLSDLLGEIDLKQFDIDGPLPEDLPEAKGSQSRREVIINLARRENLTIRQLYQRVSGASGHRSIWGTPKQIADQFEQWVYEEAADGFNILPPYLPESMNDFVNFVVPELQRRGIFRTEYEGSTLRDHLGLARPKNSVAKPS</sequence>
<proteinExistence type="evidence at protein level"/>
<evidence type="ECO:0000250" key="1">
    <source>
        <dbReference type="UniProtKB" id="O34974"/>
    </source>
</evidence>
<evidence type="ECO:0000269" key="2">
    <source>
    </source>
</evidence>
<evidence type="ECO:0000269" key="3">
    <source>
    </source>
</evidence>
<evidence type="ECO:0000305" key="4"/>